<protein>
    <recommendedName>
        <fullName evidence="1">Exodeoxyribonuclease 7 large subunit</fullName>
        <ecNumber evidence="1">3.1.11.6</ecNumber>
    </recommendedName>
    <alternativeName>
        <fullName evidence="1">Exodeoxyribonuclease VII large subunit</fullName>
        <shortName evidence="1">Exonuclease VII large subunit</shortName>
    </alternativeName>
</protein>
<feature type="chain" id="PRO_0000303810" description="Exodeoxyribonuclease 7 large subunit">
    <location>
        <begin position="1"/>
        <end position="459"/>
    </location>
</feature>
<gene>
    <name evidence="1" type="primary">xseA</name>
    <name type="ordered locus">PSEEN4397</name>
</gene>
<name>EX7L_PSEE4</name>
<reference key="1">
    <citation type="journal article" date="2006" name="Nat. Biotechnol.">
        <title>Complete genome sequence of the entomopathogenic and metabolically versatile soil bacterium Pseudomonas entomophila.</title>
        <authorList>
            <person name="Vodovar N."/>
            <person name="Vallenet D."/>
            <person name="Cruveiller S."/>
            <person name="Rouy Z."/>
            <person name="Barbe V."/>
            <person name="Acosta C."/>
            <person name="Cattolico L."/>
            <person name="Jubin C."/>
            <person name="Lajus A."/>
            <person name="Segurens B."/>
            <person name="Vacherie B."/>
            <person name="Wincker P."/>
            <person name="Weissenbach J."/>
            <person name="Lemaitre B."/>
            <person name="Medigue C."/>
            <person name="Boccard F."/>
        </authorList>
    </citation>
    <scope>NUCLEOTIDE SEQUENCE [LARGE SCALE GENOMIC DNA]</scope>
    <source>
        <strain>L48</strain>
    </source>
</reference>
<accession>Q1I5K4</accession>
<keyword id="KW-0963">Cytoplasm</keyword>
<keyword id="KW-0269">Exonuclease</keyword>
<keyword id="KW-0378">Hydrolase</keyword>
<keyword id="KW-0540">Nuclease</keyword>
<organism>
    <name type="scientific">Pseudomonas entomophila (strain L48)</name>
    <dbReference type="NCBI Taxonomy" id="384676"/>
    <lineage>
        <taxon>Bacteria</taxon>
        <taxon>Pseudomonadati</taxon>
        <taxon>Pseudomonadota</taxon>
        <taxon>Gammaproteobacteria</taxon>
        <taxon>Pseudomonadales</taxon>
        <taxon>Pseudomonadaceae</taxon>
        <taxon>Pseudomonas</taxon>
    </lineage>
</organism>
<comment type="function">
    <text evidence="1">Bidirectionally degrades single-stranded DNA into large acid-insoluble oligonucleotides, which are then degraded further into small acid-soluble oligonucleotides.</text>
</comment>
<comment type="catalytic activity">
    <reaction evidence="1">
        <text>Exonucleolytic cleavage in either 5'- to 3'- or 3'- to 5'-direction to yield nucleoside 5'-phosphates.</text>
        <dbReference type="EC" id="3.1.11.6"/>
    </reaction>
</comment>
<comment type="subunit">
    <text evidence="1">Heterooligomer composed of large and small subunits.</text>
</comment>
<comment type="subcellular location">
    <subcellularLocation>
        <location evidence="1">Cytoplasm</location>
    </subcellularLocation>
</comment>
<comment type="similarity">
    <text evidence="1">Belongs to the XseA family.</text>
</comment>
<sequence>MIKDPFERLGLDREVLTVSQLNGRARVLLEDVFRSVWVEGEISNLARPASGHMYFTLKDSGAQIRCALFRQNALRVRQALRDGLAVRVRGKVSLFEGRGDYQLILDTVEPAGDGALRLAFEALKEKLGAEGLFSTERKRPLPAHPQRIGIITSPTGAVIRDIISVFRRRAPQVELNLIPTAVQGREAINQIVRALQMADRQGFDALILARGGGSLEDLWCFNEEAVARAVAACVTPIVSAVGHETDVSISDFVADVRAPTPSAAAELLAPDSSGLQQRLDSLQRRLLLRMQSRLAHDRLRVEGLARRLRHPGERLRQQAQRLDDLDMRLRRAFALNMNQRHERLGRLDTRLAAQHPGRSLKLLKQRLDSLAERLPKAMRDVLKDRRQRFQAQLQTLQVVSPLATLARGYSILLDEHGQAIRSAAQTHNGQRLTARLNEGELKVRVEDNHQTPVTLSLLD</sequence>
<evidence type="ECO:0000255" key="1">
    <source>
        <dbReference type="HAMAP-Rule" id="MF_00378"/>
    </source>
</evidence>
<proteinExistence type="inferred from homology"/>
<dbReference type="EC" id="3.1.11.6" evidence="1"/>
<dbReference type="EMBL" id="CT573326">
    <property type="protein sequence ID" value="CAK17081.1"/>
    <property type="molecule type" value="Genomic_DNA"/>
</dbReference>
<dbReference type="RefSeq" id="WP_011535452.1">
    <property type="nucleotide sequence ID" value="NC_008027.1"/>
</dbReference>
<dbReference type="SMR" id="Q1I5K4"/>
<dbReference type="STRING" id="384676.PSEEN4397"/>
<dbReference type="GeneID" id="32807396"/>
<dbReference type="KEGG" id="pen:PSEEN4397"/>
<dbReference type="eggNOG" id="COG1570">
    <property type="taxonomic scope" value="Bacteria"/>
</dbReference>
<dbReference type="HOGENOM" id="CLU_023625_3_1_6"/>
<dbReference type="OrthoDB" id="9802795at2"/>
<dbReference type="Proteomes" id="UP000000658">
    <property type="component" value="Chromosome"/>
</dbReference>
<dbReference type="GO" id="GO:0005737">
    <property type="term" value="C:cytoplasm"/>
    <property type="evidence" value="ECO:0007669"/>
    <property type="project" value="UniProtKB-SubCell"/>
</dbReference>
<dbReference type="GO" id="GO:0009318">
    <property type="term" value="C:exodeoxyribonuclease VII complex"/>
    <property type="evidence" value="ECO:0007669"/>
    <property type="project" value="InterPro"/>
</dbReference>
<dbReference type="GO" id="GO:0008855">
    <property type="term" value="F:exodeoxyribonuclease VII activity"/>
    <property type="evidence" value="ECO:0007669"/>
    <property type="project" value="UniProtKB-UniRule"/>
</dbReference>
<dbReference type="GO" id="GO:0003676">
    <property type="term" value="F:nucleic acid binding"/>
    <property type="evidence" value="ECO:0007669"/>
    <property type="project" value="InterPro"/>
</dbReference>
<dbReference type="GO" id="GO:0006308">
    <property type="term" value="P:DNA catabolic process"/>
    <property type="evidence" value="ECO:0007669"/>
    <property type="project" value="UniProtKB-UniRule"/>
</dbReference>
<dbReference type="CDD" id="cd04489">
    <property type="entry name" value="ExoVII_LU_OBF"/>
    <property type="match status" value="1"/>
</dbReference>
<dbReference type="Gene3D" id="2.40.50.1010">
    <property type="match status" value="1"/>
</dbReference>
<dbReference type="HAMAP" id="MF_00378">
    <property type="entry name" value="Exonuc_7_L"/>
    <property type="match status" value="1"/>
</dbReference>
<dbReference type="InterPro" id="IPR003753">
    <property type="entry name" value="Exonuc_VII_L"/>
</dbReference>
<dbReference type="InterPro" id="IPR020579">
    <property type="entry name" value="Exonuc_VII_lsu_C"/>
</dbReference>
<dbReference type="InterPro" id="IPR025824">
    <property type="entry name" value="OB-fold_nuc-bd_dom"/>
</dbReference>
<dbReference type="NCBIfam" id="TIGR00237">
    <property type="entry name" value="xseA"/>
    <property type="match status" value="1"/>
</dbReference>
<dbReference type="PANTHER" id="PTHR30008">
    <property type="entry name" value="EXODEOXYRIBONUCLEASE 7 LARGE SUBUNIT"/>
    <property type="match status" value="1"/>
</dbReference>
<dbReference type="PANTHER" id="PTHR30008:SF0">
    <property type="entry name" value="EXODEOXYRIBONUCLEASE 7 LARGE SUBUNIT"/>
    <property type="match status" value="1"/>
</dbReference>
<dbReference type="Pfam" id="PF02601">
    <property type="entry name" value="Exonuc_VII_L"/>
    <property type="match status" value="1"/>
</dbReference>
<dbReference type="Pfam" id="PF13742">
    <property type="entry name" value="tRNA_anti_2"/>
    <property type="match status" value="1"/>
</dbReference>